<keyword id="KW-0249">Electron transport</keyword>
<keyword id="KW-0349">Heme</keyword>
<keyword id="KW-0408">Iron</keyword>
<keyword id="KW-0472">Membrane</keyword>
<keyword id="KW-0479">Metal-binding</keyword>
<keyword id="KW-0496">Mitochondrion</keyword>
<keyword id="KW-0999">Mitochondrion inner membrane</keyword>
<keyword id="KW-0679">Respiratory chain</keyword>
<keyword id="KW-0812">Transmembrane</keyword>
<keyword id="KW-1133">Transmembrane helix</keyword>
<keyword id="KW-0813">Transport</keyword>
<keyword id="KW-0830">Ubiquinone</keyword>
<name>CYB_LIOAD</name>
<geneLocation type="mitochondrion"/>
<evidence type="ECO:0000250" key="1"/>
<evidence type="ECO:0000250" key="2">
    <source>
        <dbReference type="UniProtKB" id="P00157"/>
    </source>
</evidence>
<evidence type="ECO:0000255" key="3">
    <source>
        <dbReference type="PROSITE-ProRule" id="PRU00967"/>
    </source>
</evidence>
<evidence type="ECO:0000255" key="4">
    <source>
        <dbReference type="PROSITE-ProRule" id="PRU00968"/>
    </source>
</evidence>
<gene>
    <name type="primary">MT-CYB</name>
    <name type="synonym">COB</name>
    <name type="synonym">CYTB</name>
    <name type="synonym">MTCYB</name>
</gene>
<reference key="1">
    <citation type="journal article" date="2005" name="J. Mammal.">
        <title>Phylogenetics of spiny pocket mice (genus Liomys): analysis of cytochrome b based on multiple heuristic approaches.</title>
        <authorList>
            <person name="Rogers D.S."/>
            <person name="Vance V.L."/>
        </authorList>
    </citation>
    <scope>NUCLEOTIDE SEQUENCE [GENOMIC DNA]</scope>
</reference>
<organism>
    <name type="scientific">Liomys adspersus</name>
    <name type="common">Panamanian spiny pocket mouse</name>
    <name type="synonym">Heteromys adspersus</name>
    <dbReference type="NCBI Taxonomy" id="348154"/>
    <lineage>
        <taxon>Eukaryota</taxon>
        <taxon>Metazoa</taxon>
        <taxon>Chordata</taxon>
        <taxon>Craniata</taxon>
        <taxon>Vertebrata</taxon>
        <taxon>Euteleostomi</taxon>
        <taxon>Mammalia</taxon>
        <taxon>Eutheria</taxon>
        <taxon>Euarchontoglires</taxon>
        <taxon>Glires</taxon>
        <taxon>Rodentia</taxon>
        <taxon>Castorimorpha</taxon>
        <taxon>Heteromyidae</taxon>
        <taxon>Heteromyinae</taxon>
        <taxon>Heteromys</taxon>
    </lineage>
</organism>
<comment type="function">
    <text evidence="2">Component of the ubiquinol-cytochrome c reductase complex (complex III or cytochrome b-c1 complex) that is part of the mitochondrial respiratory chain. The b-c1 complex mediates electron transfer from ubiquinol to cytochrome c. Contributes to the generation of a proton gradient across the mitochondrial membrane that is then used for ATP synthesis.</text>
</comment>
<comment type="cofactor">
    <cofactor evidence="2">
        <name>heme b</name>
        <dbReference type="ChEBI" id="CHEBI:60344"/>
    </cofactor>
    <text evidence="2">Binds 2 heme b groups non-covalently.</text>
</comment>
<comment type="subunit">
    <text evidence="2">The cytochrome bc1 complex contains 11 subunits: 3 respiratory subunits (MT-CYB, CYC1 and UQCRFS1), 2 core proteins (UQCRC1 and UQCRC2) and 6 low-molecular weight proteins (UQCRH/QCR6, UQCRB/QCR7, UQCRQ/QCR8, UQCR10/QCR9, UQCR11/QCR10 and a cleavage product of UQCRFS1). This cytochrome bc1 complex then forms a dimer.</text>
</comment>
<comment type="subcellular location">
    <subcellularLocation>
        <location evidence="2">Mitochondrion inner membrane</location>
        <topology evidence="2">Multi-pass membrane protein</topology>
    </subcellularLocation>
</comment>
<comment type="miscellaneous">
    <text evidence="1">Heme 1 (or BL or b562) is low-potential and absorbs at about 562 nm, and heme 2 (or BH or b566) is high-potential and absorbs at about 566 nm.</text>
</comment>
<comment type="similarity">
    <text evidence="3 4">Belongs to the cytochrome b family.</text>
</comment>
<comment type="caution">
    <text evidence="2">The full-length protein contains only eight transmembrane helices, not nine as predicted by bioinformatics tools.</text>
</comment>
<accession>Q2N2J6</accession>
<feature type="chain" id="PRO_0000255064" description="Cytochrome b">
    <location>
        <begin position="1"/>
        <end position="379"/>
    </location>
</feature>
<feature type="transmembrane region" description="Helical" evidence="2">
    <location>
        <begin position="33"/>
        <end position="53"/>
    </location>
</feature>
<feature type="transmembrane region" description="Helical" evidence="2">
    <location>
        <begin position="77"/>
        <end position="98"/>
    </location>
</feature>
<feature type="transmembrane region" description="Helical" evidence="2">
    <location>
        <begin position="113"/>
        <end position="133"/>
    </location>
</feature>
<feature type="transmembrane region" description="Helical" evidence="2">
    <location>
        <begin position="178"/>
        <end position="198"/>
    </location>
</feature>
<feature type="transmembrane region" description="Helical" evidence="2">
    <location>
        <begin position="226"/>
        <end position="246"/>
    </location>
</feature>
<feature type="transmembrane region" description="Helical" evidence="2">
    <location>
        <begin position="288"/>
        <end position="308"/>
    </location>
</feature>
<feature type="transmembrane region" description="Helical" evidence="2">
    <location>
        <begin position="320"/>
        <end position="340"/>
    </location>
</feature>
<feature type="transmembrane region" description="Helical" evidence="2">
    <location>
        <begin position="347"/>
        <end position="367"/>
    </location>
</feature>
<feature type="binding site" description="axial binding residue" evidence="2">
    <location>
        <position position="83"/>
    </location>
    <ligand>
        <name>heme b</name>
        <dbReference type="ChEBI" id="CHEBI:60344"/>
        <label>b562</label>
    </ligand>
    <ligandPart>
        <name>Fe</name>
        <dbReference type="ChEBI" id="CHEBI:18248"/>
    </ligandPart>
</feature>
<feature type="binding site" description="axial binding residue" evidence="2">
    <location>
        <position position="97"/>
    </location>
    <ligand>
        <name>heme b</name>
        <dbReference type="ChEBI" id="CHEBI:60344"/>
        <label>b566</label>
    </ligand>
    <ligandPart>
        <name>Fe</name>
        <dbReference type="ChEBI" id="CHEBI:18248"/>
    </ligandPart>
</feature>
<feature type="binding site" description="axial binding residue" evidence="2">
    <location>
        <position position="182"/>
    </location>
    <ligand>
        <name>heme b</name>
        <dbReference type="ChEBI" id="CHEBI:60344"/>
        <label>b562</label>
    </ligand>
    <ligandPart>
        <name>Fe</name>
        <dbReference type="ChEBI" id="CHEBI:18248"/>
    </ligandPart>
</feature>
<feature type="binding site" description="axial binding residue" evidence="2">
    <location>
        <position position="196"/>
    </location>
    <ligand>
        <name>heme b</name>
        <dbReference type="ChEBI" id="CHEBI:60344"/>
        <label>b566</label>
    </ligand>
    <ligandPart>
        <name>Fe</name>
        <dbReference type="ChEBI" id="CHEBI:18248"/>
    </ligandPart>
</feature>
<feature type="binding site" evidence="2">
    <location>
        <position position="201"/>
    </location>
    <ligand>
        <name>a ubiquinone</name>
        <dbReference type="ChEBI" id="CHEBI:16389"/>
    </ligand>
</feature>
<proteinExistence type="inferred from homology"/>
<dbReference type="EMBL" id="DQ168469">
    <property type="protein sequence ID" value="ABB82465.1"/>
    <property type="molecule type" value="Genomic_DNA"/>
</dbReference>
<dbReference type="SMR" id="Q2N2J6"/>
<dbReference type="GO" id="GO:0005743">
    <property type="term" value="C:mitochondrial inner membrane"/>
    <property type="evidence" value="ECO:0007669"/>
    <property type="project" value="UniProtKB-SubCell"/>
</dbReference>
<dbReference type="GO" id="GO:0045275">
    <property type="term" value="C:respiratory chain complex III"/>
    <property type="evidence" value="ECO:0007669"/>
    <property type="project" value="InterPro"/>
</dbReference>
<dbReference type="GO" id="GO:0046872">
    <property type="term" value="F:metal ion binding"/>
    <property type="evidence" value="ECO:0007669"/>
    <property type="project" value="UniProtKB-KW"/>
</dbReference>
<dbReference type="GO" id="GO:0008121">
    <property type="term" value="F:ubiquinol-cytochrome-c reductase activity"/>
    <property type="evidence" value="ECO:0007669"/>
    <property type="project" value="InterPro"/>
</dbReference>
<dbReference type="GO" id="GO:0006122">
    <property type="term" value="P:mitochondrial electron transport, ubiquinol to cytochrome c"/>
    <property type="evidence" value="ECO:0007669"/>
    <property type="project" value="TreeGrafter"/>
</dbReference>
<dbReference type="CDD" id="cd00290">
    <property type="entry name" value="cytochrome_b_C"/>
    <property type="match status" value="1"/>
</dbReference>
<dbReference type="CDD" id="cd00284">
    <property type="entry name" value="Cytochrome_b_N"/>
    <property type="match status" value="1"/>
</dbReference>
<dbReference type="FunFam" id="1.20.810.10:FF:000002">
    <property type="entry name" value="Cytochrome b"/>
    <property type="match status" value="1"/>
</dbReference>
<dbReference type="Gene3D" id="1.20.810.10">
    <property type="entry name" value="Cytochrome Bc1 Complex, Chain C"/>
    <property type="match status" value="1"/>
</dbReference>
<dbReference type="InterPro" id="IPR005798">
    <property type="entry name" value="Cyt_b/b6_C"/>
</dbReference>
<dbReference type="InterPro" id="IPR036150">
    <property type="entry name" value="Cyt_b/b6_C_sf"/>
</dbReference>
<dbReference type="InterPro" id="IPR005797">
    <property type="entry name" value="Cyt_b/b6_N"/>
</dbReference>
<dbReference type="InterPro" id="IPR027387">
    <property type="entry name" value="Cytb/b6-like_sf"/>
</dbReference>
<dbReference type="InterPro" id="IPR030689">
    <property type="entry name" value="Cytochrome_b"/>
</dbReference>
<dbReference type="InterPro" id="IPR048260">
    <property type="entry name" value="Cytochrome_b_C_euk/bac"/>
</dbReference>
<dbReference type="InterPro" id="IPR048259">
    <property type="entry name" value="Cytochrome_b_N_euk/bac"/>
</dbReference>
<dbReference type="InterPro" id="IPR016174">
    <property type="entry name" value="Di-haem_cyt_TM"/>
</dbReference>
<dbReference type="PANTHER" id="PTHR19271">
    <property type="entry name" value="CYTOCHROME B"/>
    <property type="match status" value="1"/>
</dbReference>
<dbReference type="PANTHER" id="PTHR19271:SF16">
    <property type="entry name" value="CYTOCHROME B"/>
    <property type="match status" value="1"/>
</dbReference>
<dbReference type="Pfam" id="PF00032">
    <property type="entry name" value="Cytochrom_B_C"/>
    <property type="match status" value="1"/>
</dbReference>
<dbReference type="Pfam" id="PF00033">
    <property type="entry name" value="Cytochrome_B"/>
    <property type="match status" value="1"/>
</dbReference>
<dbReference type="PIRSF" id="PIRSF038885">
    <property type="entry name" value="COB"/>
    <property type="match status" value="1"/>
</dbReference>
<dbReference type="SUPFAM" id="SSF81648">
    <property type="entry name" value="a domain/subunit of cytochrome bc1 complex (Ubiquinol-cytochrome c reductase)"/>
    <property type="match status" value="1"/>
</dbReference>
<dbReference type="SUPFAM" id="SSF81342">
    <property type="entry name" value="Transmembrane di-heme cytochromes"/>
    <property type="match status" value="1"/>
</dbReference>
<dbReference type="PROSITE" id="PS51003">
    <property type="entry name" value="CYTB_CTER"/>
    <property type="match status" value="1"/>
</dbReference>
<dbReference type="PROSITE" id="PS51002">
    <property type="entry name" value="CYTB_NTER"/>
    <property type="match status" value="1"/>
</dbReference>
<sequence length="379" mass="42779">MTITRKSHPLMKTINHAFIDLPTPINISGWWNFGSLIGLCLIIQIATGLFLAMHYTADTLTAFSSVTHICRDVNYGWLIRNMHANGASLFFVCLYLHIGRGIYYGSYLYKETWNVGILLLFMVMATAFMGYVLPWGQMSFWGATVITNLLSAIPYIGPDLVEWIWGGFSVDKATLTRFFAFHFILPFIIAALAMVHLLFLHETGSNNPLGISSNCDKIPFHPYYTFKDLLGVVILLGLYMTFVLFFPDLLGDPDNYSPANPLNTPPHIKPEWYFLFAYAILRSIPNKLGGVIALVMSILVLALFPILHTSNQRSLTFRPISQCLFWILVTDLLILTWIGGQPVEPPFVIIGQVASILYFLIILVLFPLAGLIENKMLKW</sequence>
<protein>
    <recommendedName>
        <fullName>Cytochrome b</fullName>
    </recommendedName>
    <alternativeName>
        <fullName>Complex III subunit 3</fullName>
    </alternativeName>
    <alternativeName>
        <fullName>Complex III subunit III</fullName>
    </alternativeName>
    <alternativeName>
        <fullName>Cytochrome b-c1 complex subunit 3</fullName>
    </alternativeName>
    <alternativeName>
        <fullName>Ubiquinol-cytochrome-c reductase complex cytochrome b subunit</fullName>
    </alternativeName>
</protein>